<comment type="subcellular location">
    <subcellularLocation>
        <location evidence="3">Secreted</location>
    </subcellularLocation>
</comment>
<accession>Q86HP9</accession>
<accession>Q555E2</accession>
<name>Y7697_DICDI</name>
<keyword id="KW-1185">Reference proteome</keyword>
<keyword id="KW-0964">Secreted</keyword>
<keyword id="KW-0732">Signal</keyword>
<evidence type="ECO:0000255" key="1"/>
<evidence type="ECO:0000256" key="2">
    <source>
        <dbReference type="SAM" id="MobiDB-lite"/>
    </source>
</evidence>
<evidence type="ECO:0000305" key="3"/>
<sequence length="185" mass="18896">MLLKLILILCFLVTLSLSVKVDSADPALFTQGPTIASGGTGNTGANPCYGHDDEDGSKDPAMFTQGPVSSGSGSGSGGYCPHHKNRAQEGGKKDTTKEQPKENNNNKNLGRHSSSGSGSGSGSGCGVTGDTGTGSGRTTAPVNDGVTYKSSNVKETEQYRGGAGRGKHNQATEENVQDCGEITGW</sequence>
<protein>
    <recommendedName>
        <fullName>Uncharacterized protein DDB_G0274485</fullName>
    </recommendedName>
</protein>
<gene>
    <name type="ORF">DDB_G0274485</name>
</gene>
<feature type="signal peptide" evidence="1">
    <location>
        <begin position="1"/>
        <end position="18"/>
    </location>
</feature>
<feature type="chain" id="PRO_0000348139" description="Uncharacterized protein DDB_G0274485">
    <location>
        <begin position="19"/>
        <end position="185"/>
    </location>
</feature>
<feature type="region of interest" description="Disordered" evidence="2">
    <location>
        <begin position="30"/>
        <end position="185"/>
    </location>
</feature>
<feature type="compositionally biased region" description="Basic and acidic residues" evidence="2">
    <location>
        <begin position="86"/>
        <end position="101"/>
    </location>
</feature>
<feature type="compositionally biased region" description="Low complexity" evidence="2">
    <location>
        <begin position="103"/>
        <end position="116"/>
    </location>
</feature>
<feature type="compositionally biased region" description="Gly residues" evidence="2">
    <location>
        <begin position="117"/>
        <end position="135"/>
    </location>
</feature>
<reference key="1">
    <citation type="journal article" date="2002" name="Nature">
        <title>Sequence and analysis of chromosome 2 of Dictyostelium discoideum.</title>
        <authorList>
            <person name="Gloeckner G."/>
            <person name="Eichinger L."/>
            <person name="Szafranski K."/>
            <person name="Pachebat J.A."/>
            <person name="Bankier A.T."/>
            <person name="Dear P.H."/>
            <person name="Lehmann R."/>
            <person name="Baumgart C."/>
            <person name="Parra G."/>
            <person name="Abril J.F."/>
            <person name="Guigo R."/>
            <person name="Kumpf K."/>
            <person name="Tunggal B."/>
            <person name="Cox E.C."/>
            <person name="Quail M.A."/>
            <person name="Platzer M."/>
            <person name="Rosenthal A."/>
            <person name="Noegel A.A."/>
        </authorList>
    </citation>
    <scope>NUCLEOTIDE SEQUENCE [LARGE SCALE GENOMIC DNA]</scope>
    <source>
        <strain>AX4</strain>
    </source>
</reference>
<reference key="2">
    <citation type="journal article" date="2005" name="Nature">
        <title>The genome of the social amoeba Dictyostelium discoideum.</title>
        <authorList>
            <person name="Eichinger L."/>
            <person name="Pachebat J.A."/>
            <person name="Gloeckner G."/>
            <person name="Rajandream M.A."/>
            <person name="Sucgang R."/>
            <person name="Berriman M."/>
            <person name="Song J."/>
            <person name="Olsen R."/>
            <person name="Szafranski K."/>
            <person name="Xu Q."/>
            <person name="Tunggal B."/>
            <person name="Kummerfeld S."/>
            <person name="Madera M."/>
            <person name="Konfortov B.A."/>
            <person name="Rivero F."/>
            <person name="Bankier A.T."/>
            <person name="Lehmann R."/>
            <person name="Hamlin N."/>
            <person name="Davies R."/>
            <person name="Gaudet P."/>
            <person name="Fey P."/>
            <person name="Pilcher K."/>
            <person name="Chen G."/>
            <person name="Saunders D."/>
            <person name="Sodergren E.J."/>
            <person name="Davis P."/>
            <person name="Kerhornou A."/>
            <person name="Nie X."/>
            <person name="Hall N."/>
            <person name="Anjard C."/>
            <person name="Hemphill L."/>
            <person name="Bason N."/>
            <person name="Farbrother P."/>
            <person name="Desany B."/>
            <person name="Just E."/>
            <person name="Morio T."/>
            <person name="Rost R."/>
            <person name="Churcher C.M."/>
            <person name="Cooper J."/>
            <person name="Haydock S."/>
            <person name="van Driessche N."/>
            <person name="Cronin A."/>
            <person name="Goodhead I."/>
            <person name="Muzny D.M."/>
            <person name="Mourier T."/>
            <person name="Pain A."/>
            <person name="Lu M."/>
            <person name="Harper D."/>
            <person name="Lindsay R."/>
            <person name="Hauser H."/>
            <person name="James K.D."/>
            <person name="Quiles M."/>
            <person name="Madan Babu M."/>
            <person name="Saito T."/>
            <person name="Buchrieser C."/>
            <person name="Wardroper A."/>
            <person name="Felder M."/>
            <person name="Thangavelu M."/>
            <person name="Johnson D."/>
            <person name="Knights A."/>
            <person name="Loulseged H."/>
            <person name="Mungall K.L."/>
            <person name="Oliver K."/>
            <person name="Price C."/>
            <person name="Quail M.A."/>
            <person name="Urushihara H."/>
            <person name="Hernandez J."/>
            <person name="Rabbinowitsch E."/>
            <person name="Steffen D."/>
            <person name="Sanders M."/>
            <person name="Ma J."/>
            <person name="Kohara Y."/>
            <person name="Sharp S."/>
            <person name="Simmonds M.N."/>
            <person name="Spiegler S."/>
            <person name="Tivey A."/>
            <person name="Sugano S."/>
            <person name="White B."/>
            <person name="Walker D."/>
            <person name="Woodward J.R."/>
            <person name="Winckler T."/>
            <person name="Tanaka Y."/>
            <person name="Shaulsky G."/>
            <person name="Schleicher M."/>
            <person name="Weinstock G.M."/>
            <person name="Rosenthal A."/>
            <person name="Cox E.C."/>
            <person name="Chisholm R.L."/>
            <person name="Gibbs R.A."/>
            <person name="Loomis W.F."/>
            <person name="Platzer M."/>
            <person name="Kay R.R."/>
            <person name="Williams J.G."/>
            <person name="Dear P.H."/>
            <person name="Noegel A.A."/>
            <person name="Barrell B.G."/>
            <person name="Kuspa A."/>
        </authorList>
    </citation>
    <scope>NUCLEOTIDE SEQUENCE [LARGE SCALE GENOMIC DNA]</scope>
    <source>
        <strain>AX4</strain>
    </source>
</reference>
<proteinExistence type="inferred from homology"/>
<dbReference type="EMBL" id="AAFI02000012">
    <property type="protein sequence ID" value="EAL70135.1"/>
    <property type="molecule type" value="Genomic_DNA"/>
</dbReference>
<dbReference type="RefSeq" id="XP_644131.1">
    <property type="nucleotide sequence ID" value="XM_639039.1"/>
</dbReference>
<dbReference type="PaxDb" id="44689-DDB0167697"/>
<dbReference type="EnsemblProtists" id="EAL70135">
    <property type="protein sequence ID" value="EAL70135"/>
    <property type="gene ID" value="DDB_G0274485"/>
</dbReference>
<dbReference type="GeneID" id="8619561"/>
<dbReference type="KEGG" id="ddi:DDB_G0274485"/>
<dbReference type="dictyBase" id="DDB_G0274485"/>
<dbReference type="VEuPathDB" id="AmoebaDB:DDB_G0274485"/>
<dbReference type="HOGENOM" id="CLU_1463825_0_0_1"/>
<dbReference type="InParanoid" id="Q86HP9"/>
<dbReference type="PRO" id="PR:Q86HP9"/>
<dbReference type="Proteomes" id="UP000002195">
    <property type="component" value="Chromosome 2"/>
</dbReference>
<dbReference type="GO" id="GO:0005576">
    <property type="term" value="C:extracellular region"/>
    <property type="evidence" value="ECO:0007669"/>
    <property type="project" value="UniProtKB-SubCell"/>
</dbReference>
<organism>
    <name type="scientific">Dictyostelium discoideum</name>
    <name type="common">Social amoeba</name>
    <dbReference type="NCBI Taxonomy" id="44689"/>
    <lineage>
        <taxon>Eukaryota</taxon>
        <taxon>Amoebozoa</taxon>
        <taxon>Evosea</taxon>
        <taxon>Eumycetozoa</taxon>
        <taxon>Dictyostelia</taxon>
        <taxon>Dictyosteliales</taxon>
        <taxon>Dictyosteliaceae</taxon>
        <taxon>Dictyostelium</taxon>
    </lineage>
</organism>